<accession>P0A0T4</accession>
<accession>A1IT29</accession>
<accession>P52036</accession>
<feature type="chain" id="PRO_0000066658" description="Glutathione peroxidase homolog">
    <location>
        <begin position="1"/>
        <end position="177"/>
    </location>
</feature>
<feature type="active site" evidence="1">
    <location>
        <position position="35"/>
    </location>
</feature>
<organism>
    <name type="scientific">Neisseria meningitidis serogroup A / serotype 4A (strain DSM 15465 / Z2491)</name>
    <dbReference type="NCBI Taxonomy" id="122587"/>
    <lineage>
        <taxon>Bacteria</taxon>
        <taxon>Pseudomonadati</taxon>
        <taxon>Pseudomonadota</taxon>
        <taxon>Betaproteobacteria</taxon>
        <taxon>Neisseriales</taxon>
        <taxon>Neisseriaceae</taxon>
        <taxon>Neisseria</taxon>
    </lineage>
</organism>
<gene>
    <name type="primary">gpxA</name>
    <name type="synonym">gph</name>
    <name type="ordered locus">NMA1820</name>
</gene>
<reference key="1">
    <citation type="journal article" date="2000" name="Infect. Immun.">
        <title>Molecular and biological analysis of eight genetic islands that distinguish Neisseria meningitidis from the closely related pathogen Neisseria gonorrhoeae.</title>
        <authorList>
            <person name="Klee S.R."/>
            <person name="Nassif X."/>
            <person name="Kusecek B."/>
            <person name="Merker P."/>
            <person name="Beretti J.-L."/>
            <person name="Achtman M."/>
            <person name="Tinsley C.R."/>
        </authorList>
    </citation>
    <scope>NUCLEOTIDE SEQUENCE [GENOMIC DNA]</scope>
    <source>
        <strain>DSM 15465 / Z2491</strain>
    </source>
</reference>
<reference key="2">
    <citation type="journal article" date="2000" name="Nature">
        <title>Complete DNA sequence of a serogroup A strain of Neisseria meningitidis Z2491.</title>
        <authorList>
            <person name="Parkhill J."/>
            <person name="Achtman M."/>
            <person name="James K.D."/>
            <person name="Bentley S.D."/>
            <person name="Churcher C.M."/>
            <person name="Klee S.R."/>
            <person name="Morelli G."/>
            <person name="Basham D."/>
            <person name="Brown D."/>
            <person name="Chillingworth T."/>
            <person name="Davies R.M."/>
            <person name="Davis P."/>
            <person name="Devlin K."/>
            <person name="Feltwell T."/>
            <person name="Hamlin N."/>
            <person name="Holroyd S."/>
            <person name="Jagels K."/>
            <person name="Leather S."/>
            <person name="Moule S."/>
            <person name="Mungall K.L."/>
            <person name="Quail M.A."/>
            <person name="Rajandream M.A."/>
            <person name="Rutherford K.M."/>
            <person name="Simmonds M."/>
            <person name="Skelton J."/>
            <person name="Whitehead S."/>
            <person name="Spratt B.G."/>
            <person name="Barrell B.G."/>
        </authorList>
    </citation>
    <scope>NUCLEOTIDE SEQUENCE [LARGE SCALE GENOMIC DNA]</scope>
    <source>
        <strain>DSM 15465 / Z2491</strain>
    </source>
</reference>
<protein>
    <recommendedName>
        <fullName>Glutathione peroxidase homolog</fullName>
    </recommendedName>
</protein>
<evidence type="ECO:0000250" key="1"/>
<evidence type="ECO:0000305" key="2"/>
<comment type="function">
    <text>Important in the cellular metabolism or defense processes particular to this pathogen.</text>
</comment>
<comment type="similarity">
    <text evidence="2">Belongs to the glutathione peroxidase family.</text>
</comment>
<sequence length="177" mass="19929">MGIYDFQMKDAEGNAVDLSGYRGKVLLIVNTATRCGLTPQYEALQKLYAQYTAEGLEILDFPCNQFREQAPESSGEIAQVCMMKFGTKFKIFDKIEVNGANTAPLYAYLKSVKPQDKGNHLFKDFVLKLAALGEKRDEGDIKWNFTKFLVNRDGEVVERFAPSVTPEEIEADIRALL</sequence>
<name>GPXA_NEIMA</name>
<proteinExistence type="inferred from homology"/>
<dbReference type="EMBL" id="AJ391256">
    <property type="protein sequence ID" value="CAB72011.1"/>
    <property type="molecule type" value="Genomic_DNA"/>
</dbReference>
<dbReference type="EMBL" id="AL157959">
    <property type="protein sequence ID" value="CAM08941.1"/>
    <property type="molecule type" value="Genomic_DNA"/>
</dbReference>
<dbReference type="PIR" id="C81062">
    <property type="entry name" value="C81062"/>
</dbReference>
<dbReference type="RefSeq" id="WP_002218952.1">
    <property type="nucleotide sequence ID" value="NC_003116.1"/>
</dbReference>
<dbReference type="SMR" id="P0A0T4"/>
<dbReference type="EnsemblBacteria" id="CAM08941">
    <property type="protein sequence ID" value="CAM08941"/>
    <property type="gene ID" value="NMA1820"/>
</dbReference>
<dbReference type="KEGG" id="nma:NMA1820"/>
<dbReference type="HOGENOM" id="CLU_029507_2_2_4"/>
<dbReference type="Proteomes" id="UP000000626">
    <property type="component" value="Chromosome"/>
</dbReference>
<dbReference type="GO" id="GO:0004601">
    <property type="term" value="F:peroxidase activity"/>
    <property type="evidence" value="ECO:0007669"/>
    <property type="project" value="UniProtKB-KW"/>
</dbReference>
<dbReference type="GO" id="GO:0034599">
    <property type="term" value="P:cellular response to oxidative stress"/>
    <property type="evidence" value="ECO:0007669"/>
    <property type="project" value="TreeGrafter"/>
</dbReference>
<dbReference type="CDD" id="cd00340">
    <property type="entry name" value="GSH_Peroxidase"/>
    <property type="match status" value="1"/>
</dbReference>
<dbReference type="FunFam" id="3.40.30.10:FF:000349">
    <property type="entry name" value="Glutathione peroxidase"/>
    <property type="match status" value="1"/>
</dbReference>
<dbReference type="Gene3D" id="3.40.30.10">
    <property type="entry name" value="Glutaredoxin"/>
    <property type="match status" value="1"/>
</dbReference>
<dbReference type="InterPro" id="IPR000889">
    <property type="entry name" value="Glutathione_peroxidase"/>
</dbReference>
<dbReference type="InterPro" id="IPR029759">
    <property type="entry name" value="GPX_AS"/>
</dbReference>
<dbReference type="InterPro" id="IPR029760">
    <property type="entry name" value="GPX_CS"/>
</dbReference>
<dbReference type="InterPro" id="IPR036249">
    <property type="entry name" value="Thioredoxin-like_sf"/>
</dbReference>
<dbReference type="PANTHER" id="PTHR11592">
    <property type="entry name" value="GLUTATHIONE PEROXIDASE"/>
    <property type="match status" value="1"/>
</dbReference>
<dbReference type="PANTHER" id="PTHR11592:SF78">
    <property type="entry name" value="GLUTATHIONE PEROXIDASE"/>
    <property type="match status" value="1"/>
</dbReference>
<dbReference type="Pfam" id="PF00255">
    <property type="entry name" value="GSHPx"/>
    <property type="match status" value="1"/>
</dbReference>
<dbReference type="PIRSF" id="PIRSF000303">
    <property type="entry name" value="Glutathion_perox"/>
    <property type="match status" value="1"/>
</dbReference>
<dbReference type="PRINTS" id="PR01011">
    <property type="entry name" value="GLUTPROXDASE"/>
</dbReference>
<dbReference type="SUPFAM" id="SSF52833">
    <property type="entry name" value="Thioredoxin-like"/>
    <property type="match status" value="1"/>
</dbReference>
<dbReference type="PROSITE" id="PS00460">
    <property type="entry name" value="GLUTATHIONE_PEROXID_1"/>
    <property type="match status" value="1"/>
</dbReference>
<dbReference type="PROSITE" id="PS00763">
    <property type="entry name" value="GLUTATHIONE_PEROXID_2"/>
    <property type="match status" value="1"/>
</dbReference>
<dbReference type="PROSITE" id="PS51355">
    <property type="entry name" value="GLUTATHIONE_PEROXID_3"/>
    <property type="match status" value="1"/>
</dbReference>
<keyword id="KW-0560">Oxidoreductase</keyword>
<keyword id="KW-0575">Peroxidase</keyword>